<accession>Q12017</accession>
<accession>D6W2Y0</accession>
<comment type="function">
    <text evidence="2 5">Essential for cell growth (PubMed:10749875). Inhibits early G-protein signaling events following pheromone stimulation (PubMed:10749875). Inhibits the folding activity of the chaperonin-containing T-complex (CCT) CCT2 which leads to inhibition of cytoskeletal actin folding (PubMed:17429077). Plays a role in cell cycle progression in G1/S phase (PubMed:17429077).</text>
</comment>
<comment type="subunit">
    <text evidence="2 5">Interacts with the G protein beta-gamma subunit complex (STE4-STE18 complex) (PubMed:10749875). Interacts with CCT2; this interaction leads to inhibition of CCT complex mediated actin folding (PubMed:17429077).</text>
</comment>
<comment type="subcellular location">
    <subcellularLocation>
        <location evidence="3">Cytoplasm</location>
    </subcellularLocation>
</comment>
<comment type="disruption phenotype">
    <text evidence="5">Impaired growth, cytoskeletal disruptions caused by actin polarization defects, and abberent nuclear segregation caused by misoriented mitotic spindles (PubMed:17429077). Cells are enlarged or do not bud, caused by cell cycle arrest in G1/S phase (PubMed:17429077).</text>
</comment>
<comment type="miscellaneous">
    <text evidence="4">Present with 7700 molecules/cell in log phase SD medium.</text>
</comment>
<comment type="similarity">
    <text evidence="6">Belongs to the phosducin family.</text>
</comment>
<proteinExistence type="evidence at protein level"/>
<reference evidence="6 7" key="1">
    <citation type="journal article" date="2004" name="J. Biol. Chem.">
        <title>VIAF, a conserved inhibitor of apoptosis (IAP)-interacting factor that modulates caspase activation.</title>
        <authorList>
            <person name="Wilkinson J.C."/>
            <person name="Richter B.W.M."/>
            <person name="Wilkinson A.S."/>
            <person name="Burstein E."/>
            <person name="Rumble J.M."/>
            <person name="Balliu B."/>
            <person name="Duckett C.S."/>
        </authorList>
    </citation>
    <scope>NUCLEOTIDE SEQUENCE [MRNA]</scope>
</reference>
<reference evidence="8" key="2">
    <citation type="journal article" date="1996" name="Yeast">
        <title>DNA sequence analysis of the VPH1-SNF2 region on chromosome XV of Saccharomyces cerevisiae.</title>
        <authorList>
            <person name="Cheret G."/>
            <person name="Bernardi A."/>
            <person name="Sor F.J."/>
        </authorList>
    </citation>
    <scope>NUCLEOTIDE SEQUENCE [GENOMIC DNA]</scope>
    <source>
        <strain>ATCC 204508 / S288c</strain>
    </source>
</reference>
<reference evidence="6 9" key="3">
    <citation type="journal article" date="1997" name="Nature">
        <title>The nucleotide sequence of Saccharomyces cerevisiae chromosome XV.</title>
        <authorList>
            <person name="Dujon B."/>
            <person name="Albermann K."/>
            <person name="Aldea M."/>
            <person name="Alexandraki D."/>
            <person name="Ansorge W."/>
            <person name="Arino J."/>
            <person name="Benes V."/>
            <person name="Bohn C."/>
            <person name="Bolotin-Fukuhara M."/>
            <person name="Bordonne R."/>
            <person name="Boyer J."/>
            <person name="Camasses A."/>
            <person name="Casamayor A."/>
            <person name="Casas C."/>
            <person name="Cheret G."/>
            <person name="Cziepluch C."/>
            <person name="Daignan-Fornier B."/>
            <person name="Dang V.-D."/>
            <person name="de Haan M."/>
            <person name="Delius H."/>
            <person name="Durand P."/>
            <person name="Fairhead C."/>
            <person name="Feldmann H."/>
            <person name="Gaillon L."/>
            <person name="Galisson F."/>
            <person name="Gamo F.-J."/>
            <person name="Gancedo C."/>
            <person name="Goffeau A."/>
            <person name="Goulding S.E."/>
            <person name="Grivell L.A."/>
            <person name="Habbig B."/>
            <person name="Hand N.J."/>
            <person name="Hani J."/>
            <person name="Hattenhorst U."/>
            <person name="Hebling U."/>
            <person name="Hernando Y."/>
            <person name="Herrero E."/>
            <person name="Heumann K."/>
            <person name="Hiesel R."/>
            <person name="Hilger F."/>
            <person name="Hofmann B."/>
            <person name="Hollenberg C.P."/>
            <person name="Hughes B."/>
            <person name="Jauniaux J.-C."/>
            <person name="Kalogeropoulos A."/>
            <person name="Katsoulou C."/>
            <person name="Kordes E."/>
            <person name="Lafuente M.J."/>
            <person name="Landt O."/>
            <person name="Louis E.J."/>
            <person name="Maarse A.C."/>
            <person name="Madania A."/>
            <person name="Mannhaupt G."/>
            <person name="Marck C."/>
            <person name="Martin R.P."/>
            <person name="Mewes H.-W."/>
            <person name="Michaux G."/>
            <person name="Paces V."/>
            <person name="Parle-McDermott A.G."/>
            <person name="Pearson B.M."/>
            <person name="Perrin A."/>
            <person name="Pettersson B."/>
            <person name="Poch O."/>
            <person name="Pohl T.M."/>
            <person name="Poirey R."/>
            <person name="Portetelle D."/>
            <person name="Pujol A."/>
            <person name="Purnelle B."/>
            <person name="Ramezani Rad M."/>
            <person name="Rechmann S."/>
            <person name="Schwager C."/>
            <person name="Schweizer M."/>
            <person name="Sor F."/>
            <person name="Sterky F."/>
            <person name="Tarassov I.A."/>
            <person name="Teodoru C."/>
            <person name="Tettelin H."/>
            <person name="Thierry A."/>
            <person name="Tobiasch E."/>
            <person name="Tzermia M."/>
            <person name="Uhlen M."/>
            <person name="Unseld M."/>
            <person name="Valens M."/>
            <person name="Vandenbol M."/>
            <person name="Vetter I."/>
            <person name="Vlcek C."/>
            <person name="Voet M."/>
            <person name="Volckaert G."/>
            <person name="Voss H."/>
            <person name="Wambutt R."/>
            <person name="Wedler H."/>
            <person name="Wiemann S."/>
            <person name="Winsor B."/>
            <person name="Wolfe K.H."/>
            <person name="Zollner A."/>
            <person name="Zumstein E."/>
            <person name="Kleine K."/>
        </authorList>
    </citation>
    <scope>NUCLEOTIDE SEQUENCE [LARGE SCALE GENOMIC DNA]</scope>
    <source>
        <strain>ATCC 204508 / S288c</strain>
    </source>
</reference>
<reference key="4">
    <citation type="journal article" date="2014" name="G3 (Bethesda)">
        <title>The reference genome sequence of Saccharomyces cerevisiae: Then and now.</title>
        <authorList>
            <person name="Engel S.R."/>
            <person name="Dietrich F.S."/>
            <person name="Fisk D.G."/>
            <person name="Binkley G."/>
            <person name="Balakrishnan R."/>
            <person name="Costanzo M.C."/>
            <person name="Dwight S.S."/>
            <person name="Hitz B.C."/>
            <person name="Karra K."/>
            <person name="Nash R.S."/>
            <person name="Weng S."/>
            <person name="Wong E.D."/>
            <person name="Lloyd P."/>
            <person name="Skrzypek M.S."/>
            <person name="Miyasato S.R."/>
            <person name="Simison M."/>
            <person name="Cherry J.M."/>
        </authorList>
    </citation>
    <scope>GENOME REANNOTATION</scope>
    <source>
        <strain>ATCC 204508 / S288c</strain>
    </source>
</reference>
<reference key="5">
    <citation type="journal article" date="2007" name="Genome Res.">
        <title>Approaching a complete repository of sequence-verified protein-encoding clones for Saccharomyces cerevisiae.</title>
        <authorList>
            <person name="Hu Y."/>
            <person name="Rolfs A."/>
            <person name="Bhullar B."/>
            <person name="Murthy T.V.S."/>
            <person name="Zhu C."/>
            <person name="Berger M.F."/>
            <person name="Camargo A.A."/>
            <person name="Kelley F."/>
            <person name="McCarron S."/>
            <person name="Jepson D."/>
            <person name="Richardson A."/>
            <person name="Raphael J."/>
            <person name="Moreira D."/>
            <person name="Taycher E."/>
            <person name="Zuo D."/>
            <person name="Mohr S."/>
            <person name="Kane M.F."/>
            <person name="Williamson J."/>
            <person name="Simpson A.J.G."/>
            <person name="Bulyk M.L."/>
            <person name="Harlow E."/>
            <person name="Marsischky G."/>
            <person name="Kolodner R.D."/>
            <person name="LaBaer J."/>
        </authorList>
    </citation>
    <scope>NUCLEOTIDE SEQUENCE</scope>
</reference>
<reference evidence="6" key="6">
    <citation type="journal article" date="2000" name="J. Biol. Chem.">
        <title>Functional analysis of Plp1 and Plp2, two homologues of phosducin in yeast.</title>
        <authorList>
            <person name="Flanary P.L."/>
            <person name="DiBello P.R."/>
            <person name="Estrada P."/>
            <person name="Dohlman H.G."/>
        </authorList>
    </citation>
    <scope>FUNCTION</scope>
    <scope>INTERACTION WITH THE STE4-STE18 COMPLEX</scope>
</reference>
<reference evidence="6" key="7">
    <citation type="journal article" date="2003" name="Nature">
        <title>Global analysis of protein localization in budding yeast.</title>
        <authorList>
            <person name="Huh W.-K."/>
            <person name="Falvo J.V."/>
            <person name="Gerke L.C."/>
            <person name="Carroll A.S."/>
            <person name="Howson R.W."/>
            <person name="Weissman J.S."/>
            <person name="O'Shea E.K."/>
        </authorList>
    </citation>
    <scope>SUBCELLULAR LOCATION [LARGE SCALE ANALYSIS]</scope>
</reference>
<reference key="8">
    <citation type="journal article" date="2003" name="Nature">
        <title>Global analysis of protein expression in yeast.</title>
        <authorList>
            <person name="Ghaemmaghami S."/>
            <person name="Huh W.-K."/>
            <person name="Bower K."/>
            <person name="Howson R.W."/>
            <person name="Belle A."/>
            <person name="Dephoure N."/>
            <person name="O'Shea E.K."/>
            <person name="Weissman J.S."/>
        </authorList>
    </citation>
    <scope>LEVEL OF PROTEIN EXPRESSION [LARGE SCALE ANALYSIS]</scope>
</reference>
<reference key="9">
    <citation type="journal article" date="2005" name="Mol. Cell. Proteomics">
        <title>Quantitative phosphoproteomics applied to the yeast pheromone signaling pathway.</title>
        <authorList>
            <person name="Gruhler A."/>
            <person name="Olsen J.V."/>
            <person name="Mohammed S."/>
            <person name="Mortensen P."/>
            <person name="Faergeman N.J."/>
            <person name="Mann M."/>
            <person name="Jensen O.N."/>
        </authorList>
    </citation>
    <scope>PHOSPHORYLATION [LARGE SCALE ANALYSIS] AT SER-35</scope>
    <scope>IDENTIFICATION BY MASS SPECTROMETRY [LARGE SCALE ANALYSIS]</scope>
    <source>
        <strain>YAL6B</strain>
    </source>
</reference>
<reference key="10">
    <citation type="journal article" date="2007" name="J. Proteome Res.">
        <title>Large-scale phosphorylation analysis of alpha-factor-arrested Saccharomyces cerevisiae.</title>
        <authorList>
            <person name="Li X."/>
            <person name="Gerber S.A."/>
            <person name="Rudner A.D."/>
            <person name="Beausoleil S.A."/>
            <person name="Haas W."/>
            <person name="Villen J."/>
            <person name="Elias J.E."/>
            <person name="Gygi S.P."/>
        </authorList>
    </citation>
    <scope>PHOSPHORYLATION [LARGE SCALE ANALYSIS] AT SER-35 AND SER-62</scope>
    <scope>IDENTIFICATION BY MASS SPECTROMETRY [LARGE SCALE ANALYSIS]</scope>
    <source>
        <strain>ADR376</strain>
    </source>
</reference>
<reference key="11">
    <citation type="journal article" date="2007" name="Mol. Biol. Cell">
        <title>Functional interaction between phosducin-like protein 2 and cytosolic chaperonin is essential for cytoskeletal protein function and cell cycle progression.</title>
        <authorList>
            <person name="Stirling P.C."/>
            <person name="Srayko M."/>
            <person name="Takhar K.S."/>
            <person name="Pozniakovsky A."/>
            <person name="Hyman A.A."/>
            <person name="Leroux M.R."/>
        </authorList>
    </citation>
    <scope>FUNCTION</scope>
    <scope>INTERACTION WITH CCT2</scope>
    <scope>DISRUPTION PHENOTYPE</scope>
</reference>
<reference key="12">
    <citation type="journal article" date="2007" name="Proc. Natl. Acad. Sci. U.S.A.">
        <title>Analysis of phosphorylation sites on proteins from Saccharomyces cerevisiae by electron transfer dissociation (ETD) mass spectrometry.</title>
        <authorList>
            <person name="Chi A."/>
            <person name="Huttenhower C."/>
            <person name="Geer L.Y."/>
            <person name="Coon J.J."/>
            <person name="Syka J.E.P."/>
            <person name="Bai D.L."/>
            <person name="Shabanowitz J."/>
            <person name="Burke D.J."/>
            <person name="Troyanskaya O.G."/>
            <person name="Hunt D.F."/>
        </authorList>
    </citation>
    <scope>PHOSPHORYLATION [LARGE SCALE ANALYSIS] AT SER-35</scope>
    <scope>IDENTIFICATION BY MASS SPECTROMETRY [LARGE SCALE ANALYSIS]</scope>
</reference>
<reference key="13">
    <citation type="journal article" date="2008" name="Mol. Cell. Proteomics">
        <title>A multidimensional chromatography technology for in-depth phosphoproteome analysis.</title>
        <authorList>
            <person name="Albuquerque C.P."/>
            <person name="Smolka M.B."/>
            <person name="Payne S.H."/>
            <person name="Bafna V."/>
            <person name="Eng J."/>
            <person name="Zhou H."/>
        </authorList>
    </citation>
    <scope>PHOSPHORYLATION [LARGE SCALE ANALYSIS] AT SER-35 AND SER-62</scope>
    <scope>IDENTIFICATION BY MASS SPECTROMETRY [LARGE SCALE ANALYSIS]</scope>
</reference>
<reference key="14">
    <citation type="journal article" date="2009" name="Science">
        <title>Global analysis of Cdk1 substrate phosphorylation sites provides insights into evolution.</title>
        <authorList>
            <person name="Holt L.J."/>
            <person name="Tuch B.B."/>
            <person name="Villen J."/>
            <person name="Johnson A.D."/>
            <person name="Gygi S.P."/>
            <person name="Morgan D.O."/>
        </authorList>
    </citation>
    <scope>PHOSPHORYLATION [LARGE SCALE ANALYSIS] AT SER-35 AND SER-62</scope>
    <scope>IDENTIFICATION BY MASS SPECTROMETRY [LARGE SCALE ANALYSIS]</scope>
</reference>
<name>PLP2_YEAST</name>
<keyword id="KW-0002">3D-structure</keyword>
<keyword id="KW-0963">Cytoplasm</keyword>
<keyword id="KW-0589">Pheromone response</keyword>
<keyword id="KW-0597">Phosphoprotein</keyword>
<keyword id="KW-1185">Reference proteome</keyword>
<keyword id="KW-0734">Signal transduction inhibitor</keyword>
<organism>
    <name type="scientific">Saccharomyces cerevisiae (strain ATCC 204508 / S288c)</name>
    <name type="common">Baker's yeast</name>
    <dbReference type="NCBI Taxonomy" id="559292"/>
    <lineage>
        <taxon>Eukaryota</taxon>
        <taxon>Fungi</taxon>
        <taxon>Dikarya</taxon>
        <taxon>Ascomycota</taxon>
        <taxon>Saccharomycotina</taxon>
        <taxon>Saccharomycetes</taxon>
        <taxon>Saccharomycetales</taxon>
        <taxon>Saccharomycetaceae</taxon>
        <taxon>Saccharomyces</taxon>
    </lineage>
</organism>
<dbReference type="EMBL" id="AF110514">
    <property type="protein sequence ID" value="AAG21890.1"/>
    <property type="molecule type" value="mRNA"/>
</dbReference>
<dbReference type="EMBL" id="X89633">
    <property type="protein sequence ID" value="CAA61786.1"/>
    <property type="molecule type" value="Genomic_DNA"/>
</dbReference>
<dbReference type="EMBL" id="Z75189">
    <property type="protein sequence ID" value="CAA99507.1"/>
    <property type="molecule type" value="Genomic_DNA"/>
</dbReference>
<dbReference type="EMBL" id="AY558032">
    <property type="protein sequence ID" value="AAS56358.1"/>
    <property type="molecule type" value="Genomic_DNA"/>
</dbReference>
<dbReference type="EMBL" id="BK006948">
    <property type="protein sequence ID" value="DAA11046.1"/>
    <property type="molecule type" value="Genomic_DNA"/>
</dbReference>
<dbReference type="PIR" id="S67183">
    <property type="entry name" value="S67183"/>
</dbReference>
<dbReference type="RefSeq" id="NP_014924.3">
    <property type="nucleotide sequence ID" value="NM_001183700.3"/>
</dbReference>
<dbReference type="PDB" id="7YLU">
    <property type="method" value="EM"/>
    <property type="resolution" value="4.55 A"/>
    <property type="chains" value="P=1-286"/>
</dbReference>
<dbReference type="PDB" id="7YLV">
    <property type="method" value="EM"/>
    <property type="resolution" value="3.91 A"/>
    <property type="chains" value="P=1-286"/>
</dbReference>
<dbReference type="PDB" id="7YLW">
    <property type="method" value="EM"/>
    <property type="resolution" value="3.39 A"/>
    <property type="chains" value="p=1-286"/>
</dbReference>
<dbReference type="PDB" id="7YLX">
    <property type="method" value="EM"/>
    <property type="resolution" value="3.20 A"/>
    <property type="chains" value="p=1-286"/>
</dbReference>
<dbReference type="PDB" id="7YLY">
    <property type="method" value="EM"/>
    <property type="resolution" value="3.05 A"/>
    <property type="chains" value="P/p=1-286"/>
</dbReference>
<dbReference type="PDBsum" id="7YLU"/>
<dbReference type="PDBsum" id="7YLV"/>
<dbReference type="PDBsum" id="7YLW"/>
<dbReference type="PDBsum" id="7YLX"/>
<dbReference type="PDBsum" id="7YLY"/>
<dbReference type="EMDB" id="EMD-33917"/>
<dbReference type="EMDB" id="EMD-33918"/>
<dbReference type="EMDB" id="EMD-33919"/>
<dbReference type="EMDB" id="EMD-33920"/>
<dbReference type="EMDB" id="EMD-33921"/>
<dbReference type="SMR" id="Q12017"/>
<dbReference type="BioGRID" id="34669">
    <property type="interactions" value="56"/>
</dbReference>
<dbReference type="DIP" id="DIP-5004N"/>
<dbReference type="FunCoup" id="Q12017">
    <property type="interactions" value="562"/>
</dbReference>
<dbReference type="IntAct" id="Q12017">
    <property type="interactions" value="13"/>
</dbReference>
<dbReference type="MINT" id="Q12017"/>
<dbReference type="STRING" id="4932.YOR281C"/>
<dbReference type="iPTMnet" id="Q12017"/>
<dbReference type="PaxDb" id="4932-YOR281C"/>
<dbReference type="PeptideAtlas" id="Q12017"/>
<dbReference type="EnsemblFungi" id="YOR281C_mRNA">
    <property type="protein sequence ID" value="YOR281C"/>
    <property type="gene ID" value="YOR281C"/>
</dbReference>
<dbReference type="GeneID" id="854456"/>
<dbReference type="KEGG" id="sce:YOR281C"/>
<dbReference type="AGR" id="SGD:S000005807"/>
<dbReference type="SGD" id="S000005807">
    <property type="gene designation" value="PLP2"/>
</dbReference>
<dbReference type="VEuPathDB" id="FungiDB:YOR281C"/>
<dbReference type="eggNOG" id="KOG3170">
    <property type="taxonomic scope" value="Eukaryota"/>
</dbReference>
<dbReference type="GeneTree" id="ENSGT00940000175722"/>
<dbReference type="HOGENOM" id="CLU_072604_1_0_1"/>
<dbReference type="InParanoid" id="Q12017"/>
<dbReference type="OMA" id="FCEIRAN"/>
<dbReference type="OrthoDB" id="45518at2759"/>
<dbReference type="BioCyc" id="YEAST:G3O-33768-MONOMER"/>
<dbReference type="BioGRID-ORCS" id="854456">
    <property type="hits" value="0 hits in 10 CRISPR screens"/>
</dbReference>
<dbReference type="PRO" id="PR:Q12017"/>
<dbReference type="Proteomes" id="UP000002311">
    <property type="component" value="Chromosome XV"/>
</dbReference>
<dbReference type="RNAct" id="Q12017">
    <property type="molecule type" value="protein"/>
</dbReference>
<dbReference type="GO" id="GO:0005737">
    <property type="term" value="C:cytoplasm"/>
    <property type="evidence" value="ECO:0000353"/>
    <property type="project" value="SGD"/>
</dbReference>
<dbReference type="GO" id="GO:0003779">
    <property type="term" value="F:actin binding"/>
    <property type="evidence" value="ECO:0000314"/>
    <property type="project" value="SGD"/>
</dbReference>
<dbReference type="GO" id="GO:0031683">
    <property type="term" value="F:G-protein beta/gamma-subunit complex binding"/>
    <property type="evidence" value="ECO:0000314"/>
    <property type="project" value="SGD"/>
</dbReference>
<dbReference type="GO" id="GO:0030036">
    <property type="term" value="P:actin cytoskeleton organization"/>
    <property type="evidence" value="ECO:0000315"/>
    <property type="project" value="UniProtKB"/>
</dbReference>
<dbReference type="GO" id="GO:0071444">
    <property type="term" value="P:cellular response to pheromone"/>
    <property type="evidence" value="ECO:0000315"/>
    <property type="project" value="SGD"/>
</dbReference>
<dbReference type="GO" id="GO:1903645">
    <property type="term" value="P:negative regulation of chaperone-mediated protein folding"/>
    <property type="evidence" value="ECO:0000315"/>
    <property type="project" value="UniProtKB"/>
</dbReference>
<dbReference type="GO" id="GO:0009968">
    <property type="term" value="P:negative regulation of signal transduction"/>
    <property type="evidence" value="ECO:0007669"/>
    <property type="project" value="UniProtKB-KW"/>
</dbReference>
<dbReference type="GO" id="GO:0045944">
    <property type="term" value="P:positive regulation of transcription by RNA polymerase II"/>
    <property type="evidence" value="ECO:0000315"/>
    <property type="project" value="SGD"/>
</dbReference>
<dbReference type="GO" id="GO:0006457">
    <property type="term" value="P:protein folding"/>
    <property type="evidence" value="ECO:0000314"/>
    <property type="project" value="SGD"/>
</dbReference>
<dbReference type="GO" id="GO:0051726">
    <property type="term" value="P:regulation of cell cycle"/>
    <property type="evidence" value="ECO:0000315"/>
    <property type="project" value="UniProtKB"/>
</dbReference>
<dbReference type="CDD" id="cd02988">
    <property type="entry name" value="Phd_like_VIAF"/>
    <property type="match status" value="1"/>
</dbReference>
<dbReference type="FunFam" id="3.40.30.10:FF:000365">
    <property type="entry name" value="Phosducin-like protein 2"/>
    <property type="match status" value="1"/>
</dbReference>
<dbReference type="Gene3D" id="3.40.30.10">
    <property type="entry name" value="Glutaredoxin"/>
    <property type="match status" value="1"/>
</dbReference>
<dbReference type="InterPro" id="IPR051498">
    <property type="entry name" value="Phosducin-like_chap/apop_reg"/>
</dbReference>
<dbReference type="InterPro" id="IPR036249">
    <property type="entry name" value="Thioredoxin-like_sf"/>
</dbReference>
<dbReference type="PANTHER" id="PTHR45809">
    <property type="entry name" value="VIRAL IAP-ASSOCIATED FACTOR HOMOLOG"/>
    <property type="match status" value="1"/>
</dbReference>
<dbReference type="PANTHER" id="PTHR45809:SF3">
    <property type="entry name" value="VIRAL IAP-ASSOCIATED FACTOR HOMOLOG"/>
    <property type="match status" value="1"/>
</dbReference>
<dbReference type="SUPFAM" id="SSF52833">
    <property type="entry name" value="Thioredoxin-like"/>
    <property type="match status" value="1"/>
</dbReference>
<gene>
    <name evidence="10" type="primary">PLP2</name>
    <name evidence="7" type="synonym">VIAF1</name>
    <name type="ordered locus">YOR281C</name>
</gene>
<protein>
    <recommendedName>
        <fullName>Phosducin-like protein 2</fullName>
    </recommendedName>
    <alternativeName>
        <fullName>Viral IAP-associated factor 1 homolog</fullName>
    </alternativeName>
</protein>
<sequence length="286" mass="32793">MQNEPMFQVQVDESEDSEWNDILRAKGVIPERAPSPTAKLEEALEEAIAKQHENRLEDKDLSDLEELEDDEDEDFLEAYKIKRLNEIRKLQERSKFGEVFHINKPEYNKEVTLASQGKKYEGAQTNDNGEEDDGGVYVFVHLSLQSKLQSRILSHLFQSAACKFREIKFVEIPANRAIENYPESNCPTLIVYYRGEVIKNMITLLELGGNNSKMEDFEDFMVKVGAVAEGDNRLIMNRDDEESREERKLHYGEKKSIRSGIRGKFNVGIGGNDDGNINDDDDGFFD</sequence>
<feature type="chain" id="PRO_0000163762" description="Phosducin-like protein 2">
    <location>
        <begin position="1"/>
        <end position="286"/>
    </location>
</feature>
<feature type="region of interest" description="Thioredoxin fold" evidence="1">
    <location>
        <begin position="96"/>
        <end position="286"/>
    </location>
</feature>
<feature type="modified residue" description="Phosphoserine" evidence="11 12 13 14 15">
    <location>
        <position position="35"/>
    </location>
</feature>
<feature type="modified residue" description="Phosphoserine" evidence="13 14 15">
    <location>
        <position position="62"/>
    </location>
</feature>
<feature type="helix" evidence="16">
    <location>
        <begin position="50"/>
        <end position="57"/>
    </location>
</feature>
<feature type="helix" evidence="16">
    <location>
        <begin position="61"/>
        <end position="64"/>
    </location>
</feature>
<feature type="helix" evidence="16">
    <location>
        <begin position="65"/>
        <end position="68"/>
    </location>
</feature>
<feature type="helix" evidence="16">
    <location>
        <begin position="73"/>
        <end position="93"/>
    </location>
</feature>
<feature type="helix" evidence="16">
    <location>
        <begin position="106"/>
        <end position="110"/>
    </location>
</feature>
<feature type="turn" evidence="16">
    <location>
        <begin position="111"/>
        <end position="113"/>
    </location>
</feature>
<feature type="helix" evidence="16">
    <location>
        <begin position="114"/>
        <end position="116"/>
    </location>
</feature>
<feature type="strand" evidence="16">
    <location>
        <begin position="137"/>
        <end position="143"/>
    </location>
</feature>
<feature type="helix" evidence="16">
    <location>
        <begin position="148"/>
        <end position="163"/>
    </location>
</feature>
<feature type="strand" evidence="16">
    <location>
        <begin position="165"/>
        <end position="174"/>
    </location>
</feature>
<feature type="turn" evidence="16">
    <location>
        <begin position="175"/>
        <end position="177"/>
    </location>
</feature>
<feature type="helix" evidence="16">
    <location>
        <begin position="183"/>
        <end position="185"/>
    </location>
</feature>
<feature type="strand" evidence="16">
    <location>
        <begin position="187"/>
        <end position="193"/>
    </location>
</feature>
<feature type="strand" evidence="16">
    <location>
        <begin position="196"/>
        <end position="201"/>
    </location>
</feature>
<feature type="turn" evidence="16">
    <location>
        <begin position="204"/>
        <end position="208"/>
    </location>
</feature>
<feature type="helix" evidence="16">
    <location>
        <begin position="209"/>
        <end position="211"/>
    </location>
</feature>
<feature type="helix" evidence="16">
    <location>
        <begin position="214"/>
        <end position="223"/>
    </location>
</feature>
<feature type="turn" evidence="16">
    <location>
        <begin position="235"/>
        <end position="237"/>
    </location>
</feature>
<feature type="helix" evidence="16">
    <location>
        <begin position="241"/>
        <end position="250"/>
    </location>
</feature>
<evidence type="ECO:0000250" key="1"/>
<evidence type="ECO:0000269" key="2">
    <source>
    </source>
</evidence>
<evidence type="ECO:0000269" key="3">
    <source>
    </source>
</evidence>
<evidence type="ECO:0000269" key="4">
    <source>
    </source>
</evidence>
<evidence type="ECO:0000269" key="5">
    <source>
    </source>
</evidence>
<evidence type="ECO:0000305" key="6"/>
<evidence type="ECO:0000312" key="7">
    <source>
        <dbReference type="EMBL" id="AAG21890.1"/>
    </source>
</evidence>
<evidence type="ECO:0000312" key="8">
    <source>
        <dbReference type="EMBL" id="CAA61786.1"/>
    </source>
</evidence>
<evidence type="ECO:0000312" key="9">
    <source>
        <dbReference type="EMBL" id="CAA99507.1"/>
    </source>
</evidence>
<evidence type="ECO:0000312" key="10">
    <source>
        <dbReference type="SGD" id="S000005807"/>
    </source>
</evidence>
<evidence type="ECO:0007744" key="11">
    <source>
    </source>
</evidence>
<evidence type="ECO:0007744" key="12">
    <source>
    </source>
</evidence>
<evidence type="ECO:0007744" key="13">
    <source>
    </source>
</evidence>
<evidence type="ECO:0007744" key="14">
    <source>
    </source>
</evidence>
<evidence type="ECO:0007744" key="15">
    <source>
    </source>
</evidence>
<evidence type="ECO:0007829" key="16">
    <source>
        <dbReference type="PDB" id="7YLY"/>
    </source>
</evidence>